<keyword id="KW-0119">Carbohydrate metabolism</keyword>
<keyword id="KW-0963">Cytoplasm</keyword>
<keyword id="KW-0294">Fucose metabolism</keyword>
<keyword id="KW-0413">Isomerase</keyword>
<keyword id="KW-0464">Manganese</keyword>
<keyword id="KW-0479">Metal-binding</keyword>
<keyword id="KW-1185">Reference proteome</keyword>
<name>FUCI_SHIDS</name>
<feature type="chain" id="PRO_1000067225" description="L-fucose isomerase">
    <location>
        <begin position="1"/>
        <end position="591"/>
    </location>
</feature>
<feature type="active site" description="Proton acceptor" evidence="1">
    <location>
        <position position="337"/>
    </location>
</feature>
<feature type="active site" description="Proton acceptor" evidence="1">
    <location>
        <position position="361"/>
    </location>
</feature>
<feature type="binding site" evidence="1">
    <location>
        <position position="337"/>
    </location>
    <ligand>
        <name>Mn(2+)</name>
        <dbReference type="ChEBI" id="CHEBI:29035"/>
    </ligand>
</feature>
<feature type="binding site" evidence="1">
    <location>
        <position position="361"/>
    </location>
    <ligand>
        <name>Mn(2+)</name>
        <dbReference type="ChEBI" id="CHEBI:29035"/>
    </ligand>
</feature>
<feature type="binding site" evidence="1">
    <location>
        <position position="528"/>
    </location>
    <ligand>
        <name>Mn(2+)</name>
        <dbReference type="ChEBI" id="CHEBI:29035"/>
    </ligand>
</feature>
<reference key="1">
    <citation type="journal article" date="2005" name="Nucleic Acids Res.">
        <title>Genome dynamics and diversity of Shigella species, the etiologic agents of bacillary dysentery.</title>
        <authorList>
            <person name="Yang F."/>
            <person name="Yang J."/>
            <person name="Zhang X."/>
            <person name="Chen L."/>
            <person name="Jiang Y."/>
            <person name="Yan Y."/>
            <person name="Tang X."/>
            <person name="Wang J."/>
            <person name="Xiong Z."/>
            <person name="Dong J."/>
            <person name="Xue Y."/>
            <person name="Zhu Y."/>
            <person name="Xu X."/>
            <person name="Sun L."/>
            <person name="Chen S."/>
            <person name="Nie H."/>
            <person name="Peng J."/>
            <person name="Xu J."/>
            <person name="Wang Y."/>
            <person name="Yuan Z."/>
            <person name="Wen Y."/>
            <person name="Yao Z."/>
            <person name="Shen Y."/>
            <person name="Qiang B."/>
            <person name="Hou Y."/>
            <person name="Yu J."/>
            <person name="Jin Q."/>
        </authorList>
    </citation>
    <scope>NUCLEOTIDE SEQUENCE [LARGE SCALE GENOMIC DNA]</scope>
    <source>
        <strain>Sd197</strain>
    </source>
</reference>
<sequence>MKKISLPKISIRPVIDGRRMGVRESLEEQTMNMAKATATLLTEKLRHACGAAVECVISDTCIAGMAEAAACEEKFSIQNVGLTITVTPCWCYGSETIDMDPTRPKAIWGFNGTERPGAVYLAAALAVHSQKGIPAFSIYGHDVQDADDTSIPADVEEKLLRFARAGLAVASMKGKSYLSLGGVSMGIAGSIVDHNFFESWLGMKVQAVDMTELRRRIDQKIYDEAELEMALTWADKNFRYGEDENNKQYQRNAEQSRAVLRESLLMAMCIRDMMQGNSKLADISRVEESLGYNAIAAGFQGQRHWTDQYPNGDTAEAILNSSFDWNGVREPLVVATENDSLNGVAMLMGHQLTGTAQVFADVRTYWSPEAIERVTGHKLDGLAEHGIIHLINSGSAALDGSCKQRDSEGNPTMKPHWKISQQEADACLAATEWCPAIHEYFRGGGYSSRFLTEGGVPFTMTRVNIIKGLGPVLQIAEGWSVELPKDVHDILNKRTNSTWPTTWFAPRLTGKGPFTDVYSVMANWGANHGVLTIGHVGADFITLAPMLRIPVCMHNVEETKVYRPSAWAAHGMDIEGQDYRACQNYGPLYKR</sequence>
<dbReference type="EC" id="5.3.1.25" evidence="1"/>
<dbReference type="EMBL" id="CP000034">
    <property type="protein sequence ID" value="ABB63039.1"/>
    <property type="molecule type" value="Genomic_DNA"/>
</dbReference>
<dbReference type="RefSeq" id="WP_000724185.1">
    <property type="nucleotide sequence ID" value="NC_007606.1"/>
</dbReference>
<dbReference type="RefSeq" id="YP_404530.1">
    <property type="nucleotide sequence ID" value="NC_007606.1"/>
</dbReference>
<dbReference type="SMR" id="Q32CB6"/>
<dbReference type="STRING" id="300267.SDY_3020"/>
<dbReference type="EnsemblBacteria" id="ABB63039">
    <property type="protein sequence ID" value="ABB63039"/>
    <property type="gene ID" value="SDY_3020"/>
</dbReference>
<dbReference type="KEGG" id="sdy:SDY_3020"/>
<dbReference type="PATRIC" id="fig|300267.13.peg.3626"/>
<dbReference type="HOGENOM" id="CLU_033326_1_0_6"/>
<dbReference type="UniPathway" id="UPA00563">
    <property type="reaction ID" value="UER00624"/>
</dbReference>
<dbReference type="Proteomes" id="UP000002716">
    <property type="component" value="Chromosome"/>
</dbReference>
<dbReference type="GO" id="GO:0005737">
    <property type="term" value="C:cytoplasm"/>
    <property type="evidence" value="ECO:0007669"/>
    <property type="project" value="UniProtKB-SubCell"/>
</dbReference>
<dbReference type="GO" id="GO:0008790">
    <property type="term" value="F:arabinose isomerase activity"/>
    <property type="evidence" value="ECO:0007669"/>
    <property type="project" value="TreeGrafter"/>
</dbReference>
<dbReference type="GO" id="GO:0008736">
    <property type="term" value="F:L-fucose isomerase activity"/>
    <property type="evidence" value="ECO:0007669"/>
    <property type="project" value="UniProtKB-UniRule"/>
</dbReference>
<dbReference type="GO" id="GO:0030145">
    <property type="term" value="F:manganese ion binding"/>
    <property type="evidence" value="ECO:0007669"/>
    <property type="project" value="UniProtKB-UniRule"/>
</dbReference>
<dbReference type="GO" id="GO:0019571">
    <property type="term" value="P:D-arabinose catabolic process"/>
    <property type="evidence" value="ECO:0007669"/>
    <property type="project" value="TreeGrafter"/>
</dbReference>
<dbReference type="GO" id="GO:0042355">
    <property type="term" value="P:L-fucose catabolic process"/>
    <property type="evidence" value="ECO:0007669"/>
    <property type="project" value="UniProtKB-UniRule"/>
</dbReference>
<dbReference type="CDD" id="cd03556">
    <property type="entry name" value="L-fucose_isomerase"/>
    <property type="match status" value="1"/>
</dbReference>
<dbReference type="FunFam" id="3.20.14.10:FF:000001">
    <property type="entry name" value="L-fucose isomerase"/>
    <property type="match status" value="1"/>
</dbReference>
<dbReference type="FunFam" id="3.40.275.10:FF:000001">
    <property type="entry name" value="L-fucose isomerase"/>
    <property type="match status" value="1"/>
</dbReference>
<dbReference type="FunFam" id="3.40.50.1070:FF:000001">
    <property type="entry name" value="L-fucose isomerase"/>
    <property type="match status" value="1"/>
</dbReference>
<dbReference type="Gene3D" id="3.40.50.1070">
    <property type="match status" value="1"/>
</dbReference>
<dbReference type="Gene3D" id="3.40.275.10">
    <property type="entry name" value="L-fucose Isomerase, Chain A, domain 2"/>
    <property type="match status" value="1"/>
</dbReference>
<dbReference type="Gene3D" id="3.20.14.10">
    <property type="entry name" value="L-fucose/L-arabinose isomerase, C-terminal"/>
    <property type="match status" value="1"/>
</dbReference>
<dbReference type="HAMAP" id="MF_01254">
    <property type="entry name" value="Fucose_iso"/>
    <property type="match status" value="1"/>
</dbReference>
<dbReference type="InterPro" id="IPR004216">
    <property type="entry name" value="Fuc/Ara_isomerase_C"/>
</dbReference>
<dbReference type="InterPro" id="IPR038393">
    <property type="entry name" value="Fuc_iso_dom3_sf"/>
</dbReference>
<dbReference type="InterPro" id="IPR015888">
    <property type="entry name" value="Fuc_isomerase_C"/>
</dbReference>
<dbReference type="InterPro" id="IPR038391">
    <property type="entry name" value="Fucose_iso_dom1_sf"/>
</dbReference>
<dbReference type="InterPro" id="IPR012888">
    <property type="entry name" value="Fucose_iso_N1"/>
</dbReference>
<dbReference type="InterPro" id="IPR005763">
    <property type="entry name" value="Fucose_isomerase"/>
</dbReference>
<dbReference type="InterPro" id="IPR038392">
    <property type="entry name" value="Fucose_isomerase_dom2_sf"/>
</dbReference>
<dbReference type="InterPro" id="IPR009015">
    <property type="entry name" value="Fucose_isomerase_N/cen_sf"/>
</dbReference>
<dbReference type="InterPro" id="IPR012889">
    <property type="entry name" value="Fucose_isomerase_N2"/>
</dbReference>
<dbReference type="NCBIfam" id="TIGR01089">
    <property type="entry name" value="fucI"/>
    <property type="match status" value="1"/>
</dbReference>
<dbReference type="NCBIfam" id="NF008220">
    <property type="entry name" value="PRK10991.1"/>
    <property type="match status" value="1"/>
</dbReference>
<dbReference type="PANTHER" id="PTHR37840">
    <property type="entry name" value="L-FUCOSE ISOMERASE"/>
    <property type="match status" value="1"/>
</dbReference>
<dbReference type="PANTHER" id="PTHR37840:SF1">
    <property type="entry name" value="L-FUCOSE ISOMERASE"/>
    <property type="match status" value="1"/>
</dbReference>
<dbReference type="Pfam" id="PF02952">
    <property type="entry name" value="Fucose_iso_C"/>
    <property type="match status" value="1"/>
</dbReference>
<dbReference type="Pfam" id="PF07881">
    <property type="entry name" value="Fucose_iso_N1"/>
    <property type="match status" value="1"/>
</dbReference>
<dbReference type="Pfam" id="PF07882">
    <property type="entry name" value="Fucose_iso_N2"/>
    <property type="match status" value="1"/>
</dbReference>
<dbReference type="SUPFAM" id="SSF50443">
    <property type="entry name" value="FucI/AraA C-terminal domain-like"/>
    <property type="match status" value="1"/>
</dbReference>
<dbReference type="SUPFAM" id="SSF53743">
    <property type="entry name" value="FucI/AraA N-terminal and middle domains"/>
    <property type="match status" value="1"/>
</dbReference>
<comment type="function">
    <text evidence="1">Converts the aldose L-fucose into the corresponding ketose L-fuculose.</text>
</comment>
<comment type="catalytic activity">
    <reaction evidence="1">
        <text>L-fucose = L-fuculose</text>
        <dbReference type="Rhea" id="RHEA:17233"/>
        <dbReference type="ChEBI" id="CHEBI:2181"/>
        <dbReference type="ChEBI" id="CHEBI:17617"/>
        <dbReference type="EC" id="5.3.1.25"/>
    </reaction>
</comment>
<comment type="cofactor">
    <cofactor evidence="1">
        <name>Mn(2+)</name>
        <dbReference type="ChEBI" id="CHEBI:29035"/>
    </cofactor>
</comment>
<comment type="pathway">
    <text evidence="1">Carbohydrate degradation; L-fucose degradation; L-lactaldehyde and glycerone phosphate from L-fucose: step 1/3.</text>
</comment>
<comment type="subunit">
    <text evidence="1">Homohexamer.</text>
</comment>
<comment type="subcellular location">
    <subcellularLocation>
        <location evidence="1">Cytoplasm</location>
    </subcellularLocation>
</comment>
<comment type="similarity">
    <text evidence="1">Belongs to the L-fucose isomerase family.</text>
</comment>
<organism>
    <name type="scientific">Shigella dysenteriae serotype 1 (strain Sd197)</name>
    <dbReference type="NCBI Taxonomy" id="300267"/>
    <lineage>
        <taxon>Bacteria</taxon>
        <taxon>Pseudomonadati</taxon>
        <taxon>Pseudomonadota</taxon>
        <taxon>Gammaproteobacteria</taxon>
        <taxon>Enterobacterales</taxon>
        <taxon>Enterobacteriaceae</taxon>
        <taxon>Shigella</taxon>
    </lineage>
</organism>
<evidence type="ECO:0000255" key="1">
    <source>
        <dbReference type="HAMAP-Rule" id="MF_01254"/>
    </source>
</evidence>
<proteinExistence type="inferred from homology"/>
<accession>Q32CB6</accession>
<protein>
    <recommendedName>
        <fullName evidence="1">L-fucose isomerase</fullName>
        <ecNumber evidence="1">5.3.1.25</ecNumber>
    </recommendedName>
    <alternativeName>
        <fullName evidence="1">6-deoxy-L-galactose isomerase</fullName>
    </alternativeName>
    <alternativeName>
        <fullName>FucIase</fullName>
    </alternativeName>
</protein>
<gene>
    <name evidence="1" type="primary">fucI</name>
    <name type="ordered locus">SDY_3020</name>
</gene>